<sequence>MSKPRIALIAHDAKKDEIVALAGQYRETLAQCRLVATGTTGGRIAAAHGLEVERKLSGPLGGDLQIGAELADGRVDIVVFLRDPMTAQPHDPDITALVRACDVHDVPVATNVATARMLLDDLARNMQDVC</sequence>
<evidence type="ECO:0000255" key="1">
    <source>
        <dbReference type="HAMAP-Rule" id="MF_00549"/>
    </source>
</evidence>
<accession>A0K965</accession>
<dbReference type="EC" id="4.2.3.3" evidence="1"/>
<dbReference type="EMBL" id="CP000458">
    <property type="protein sequence ID" value="ABK09042.1"/>
    <property type="molecule type" value="Genomic_DNA"/>
</dbReference>
<dbReference type="RefSeq" id="WP_006478230.1">
    <property type="nucleotide sequence ID" value="NC_008542.1"/>
</dbReference>
<dbReference type="SMR" id="A0K965"/>
<dbReference type="KEGG" id="bch:Bcen2424_2291"/>
<dbReference type="HOGENOM" id="CLU_120420_1_0_4"/>
<dbReference type="GO" id="GO:0005829">
    <property type="term" value="C:cytosol"/>
    <property type="evidence" value="ECO:0007669"/>
    <property type="project" value="TreeGrafter"/>
</dbReference>
<dbReference type="GO" id="GO:0008929">
    <property type="term" value="F:methylglyoxal synthase activity"/>
    <property type="evidence" value="ECO:0007669"/>
    <property type="project" value="UniProtKB-UniRule"/>
</dbReference>
<dbReference type="GO" id="GO:0019242">
    <property type="term" value="P:methylglyoxal biosynthetic process"/>
    <property type="evidence" value="ECO:0007669"/>
    <property type="project" value="UniProtKB-UniRule"/>
</dbReference>
<dbReference type="CDD" id="cd01422">
    <property type="entry name" value="MGS"/>
    <property type="match status" value="1"/>
</dbReference>
<dbReference type="Gene3D" id="3.40.50.1380">
    <property type="entry name" value="Methylglyoxal synthase-like domain"/>
    <property type="match status" value="1"/>
</dbReference>
<dbReference type="HAMAP" id="MF_00549">
    <property type="entry name" value="Methylglyoxal_synth"/>
    <property type="match status" value="1"/>
</dbReference>
<dbReference type="InterPro" id="IPR004363">
    <property type="entry name" value="Methylgl_synth"/>
</dbReference>
<dbReference type="InterPro" id="IPR018148">
    <property type="entry name" value="Methylglyoxal_synth_AS"/>
</dbReference>
<dbReference type="InterPro" id="IPR011607">
    <property type="entry name" value="MGS-like_dom"/>
</dbReference>
<dbReference type="InterPro" id="IPR036914">
    <property type="entry name" value="MGS-like_dom_sf"/>
</dbReference>
<dbReference type="NCBIfam" id="TIGR00160">
    <property type="entry name" value="MGSA"/>
    <property type="match status" value="1"/>
</dbReference>
<dbReference type="NCBIfam" id="NF003559">
    <property type="entry name" value="PRK05234.1"/>
    <property type="match status" value="1"/>
</dbReference>
<dbReference type="PANTHER" id="PTHR30492">
    <property type="entry name" value="METHYLGLYOXAL SYNTHASE"/>
    <property type="match status" value="1"/>
</dbReference>
<dbReference type="PANTHER" id="PTHR30492:SF0">
    <property type="entry name" value="METHYLGLYOXAL SYNTHASE"/>
    <property type="match status" value="1"/>
</dbReference>
<dbReference type="Pfam" id="PF02142">
    <property type="entry name" value="MGS"/>
    <property type="match status" value="1"/>
</dbReference>
<dbReference type="PIRSF" id="PIRSF006614">
    <property type="entry name" value="Methylglyox_syn"/>
    <property type="match status" value="1"/>
</dbReference>
<dbReference type="SMART" id="SM00851">
    <property type="entry name" value="MGS"/>
    <property type="match status" value="1"/>
</dbReference>
<dbReference type="SUPFAM" id="SSF52335">
    <property type="entry name" value="Methylglyoxal synthase-like"/>
    <property type="match status" value="1"/>
</dbReference>
<dbReference type="PROSITE" id="PS01335">
    <property type="entry name" value="METHYLGLYOXAL_SYNTH"/>
    <property type="match status" value="1"/>
</dbReference>
<dbReference type="PROSITE" id="PS51855">
    <property type="entry name" value="MGS"/>
    <property type="match status" value="1"/>
</dbReference>
<protein>
    <recommendedName>
        <fullName evidence="1">Methylglyoxal synthase</fullName>
        <shortName evidence="1">MGS</shortName>
        <ecNumber evidence="1">4.2.3.3</ecNumber>
    </recommendedName>
</protein>
<reference key="1">
    <citation type="submission" date="2006-08" db="EMBL/GenBank/DDBJ databases">
        <title>Complete sequence of chromosome 1 of Burkholderia cenocepacia HI2424.</title>
        <authorList>
            <person name="Copeland A."/>
            <person name="Lucas S."/>
            <person name="Lapidus A."/>
            <person name="Barry K."/>
            <person name="Detter J.C."/>
            <person name="Glavina del Rio T."/>
            <person name="Hammon N."/>
            <person name="Israni S."/>
            <person name="Pitluck S."/>
            <person name="Chain P."/>
            <person name="Malfatti S."/>
            <person name="Shin M."/>
            <person name="Vergez L."/>
            <person name="Schmutz J."/>
            <person name="Larimer F."/>
            <person name="Land M."/>
            <person name="Hauser L."/>
            <person name="Kyrpides N."/>
            <person name="Kim E."/>
            <person name="LiPuma J.J."/>
            <person name="Gonzalez C.F."/>
            <person name="Konstantinidis K."/>
            <person name="Tiedje J.M."/>
            <person name="Richardson P."/>
        </authorList>
    </citation>
    <scope>NUCLEOTIDE SEQUENCE [LARGE SCALE GENOMIC DNA]</scope>
    <source>
        <strain>HI2424</strain>
    </source>
</reference>
<comment type="function">
    <text evidence="1">Catalyzes the formation of methylglyoxal from dihydroxyacetone phosphate.</text>
</comment>
<comment type="catalytic activity">
    <reaction evidence="1">
        <text>dihydroxyacetone phosphate = methylglyoxal + phosphate</text>
        <dbReference type="Rhea" id="RHEA:17937"/>
        <dbReference type="ChEBI" id="CHEBI:17158"/>
        <dbReference type="ChEBI" id="CHEBI:43474"/>
        <dbReference type="ChEBI" id="CHEBI:57642"/>
        <dbReference type="EC" id="4.2.3.3"/>
    </reaction>
</comment>
<comment type="similarity">
    <text evidence="1">Belongs to the methylglyoxal synthase family.</text>
</comment>
<proteinExistence type="inferred from homology"/>
<organism>
    <name type="scientific">Burkholderia cenocepacia (strain HI2424)</name>
    <dbReference type="NCBI Taxonomy" id="331272"/>
    <lineage>
        <taxon>Bacteria</taxon>
        <taxon>Pseudomonadati</taxon>
        <taxon>Pseudomonadota</taxon>
        <taxon>Betaproteobacteria</taxon>
        <taxon>Burkholderiales</taxon>
        <taxon>Burkholderiaceae</taxon>
        <taxon>Burkholderia</taxon>
        <taxon>Burkholderia cepacia complex</taxon>
    </lineage>
</organism>
<keyword id="KW-0456">Lyase</keyword>
<feature type="chain" id="PRO_1000017790" description="Methylglyoxal synthase">
    <location>
        <begin position="1"/>
        <end position="130"/>
    </location>
</feature>
<feature type="domain" description="MGS-like" evidence="1">
    <location>
        <begin position="1"/>
        <end position="130"/>
    </location>
</feature>
<feature type="active site" description="Proton donor/acceptor" evidence="1">
    <location>
        <position position="63"/>
    </location>
</feature>
<feature type="binding site" evidence="1">
    <location>
        <position position="11"/>
    </location>
    <ligand>
        <name>substrate</name>
    </ligand>
</feature>
<feature type="binding site" evidence="1">
    <location>
        <position position="15"/>
    </location>
    <ligand>
        <name>substrate</name>
    </ligand>
</feature>
<feature type="binding site" evidence="1">
    <location>
        <begin position="37"/>
        <end position="40"/>
    </location>
    <ligand>
        <name>substrate</name>
    </ligand>
</feature>
<feature type="binding site" evidence="1">
    <location>
        <begin position="57"/>
        <end position="58"/>
    </location>
    <ligand>
        <name>substrate</name>
    </ligand>
</feature>
<feature type="binding site" evidence="1">
    <location>
        <position position="90"/>
    </location>
    <ligand>
        <name>substrate</name>
    </ligand>
</feature>
<name>MGSA_BURCH</name>
<gene>
    <name evidence="1" type="primary">mgsA</name>
    <name type="ordered locus">Bcen2424_2291</name>
</gene>